<keyword id="KW-0002">3D-structure</keyword>
<keyword id="KW-0025">Alternative splicing</keyword>
<keyword id="KW-0229">DNA integration</keyword>
<keyword id="KW-0233">DNA recombination</keyword>
<keyword id="KW-0238">DNA-binding</keyword>
<keyword id="KW-0479">Metal-binding</keyword>
<keyword id="KW-0808">Transferase</keyword>
<keyword id="KW-0814">Transposable element</keyword>
<keyword id="KW-0862">Zinc</keyword>
<keyword id="KW-0863">Zinc-finger</keyword>
<feature type="chain" id="PRO_0000068656" description="Transposable element P transposase">
    <location>
        <begin position="1"/>
        <end position="751"/>
    </location>
</feature>
<feature type="zinc finger region" description="THAP-type" evidence="1">
    <location>
        <begin position="1"/>
        <end position="77"/>
    </location>
</feature>
<feature type="splice variant" id="VSP_051942" description="In isoform C." evidence="4">
    <location>
        <begin position="316"/>
        <end position="319"/>
    </location>
</feature>
<feature type="splice variant" id="VSP_051943" description="In isoform B." evidence="4">
    <original>GMTNLKECVNKNVIP</original>
    <variation>ARNTEMLRNSGNIEE</variation>
    <location>
        <begin position="562"/>
        <end position="576"/>
    </location>
</feature>
<feature type="splice variant" id="VSP_051944" description="In isoform B." evidence="4">
    <location>
        <begin position="577"/>
        <end position="751"/>
    </location>
</feature>
<feature type="mutagenesis site" description="Impairs DNA-binding by a factor of 12." evidence="2">
    <original>H</original>
    <variation>A</variation>
    <location>
        <position position="18"/>
    </location>
</feature>
<feature type="mutagenesis site" description="Impairs DNA-binding by a factor of 15." evidence="2">
    <original>Q</original>
    <variation>A</variation>
    <location>
        <position position="42"/>
    </location>
</feature>
<feature type="mutagenesis site" description="Impairs DNA-binding by a factor of 21." evidence="2">
    <original>R</original>
    <variation>A</variation>
    <location>
        <position position="65"/>
    </location>
</feature>
<feature type="mutagenesis site" description="Abolishes DNA-binding." evidence="2">
    <original>R</original>
    <variation>A</variation>
    <location>
        <position position="66"/>
    </location>
</feature>
<feature type="mutagenesis site" description="Impairs DNA-binding by a factor of 17." evidence="2">
    <original>R</original>
    <variation>A</variation>
    <location>
        <position position="67"/>
    </location>
</feature>
<feature type="turn" evidence="7">
    <location>
        <begin position="5"/>
        <end position="8"/>
    </location>
</feature>
<feature type="strand" evidence="7">
    <location>
        <begin position="16"/>
        <end position="18"/>
    </location>
</feature>
<feature type="helix" evidence="7">
    <location>
        <begin position="23"/>
        <end position="33"/>
    </location>
</feature>
<feature type="strand" evidence="7">
    <location>
        <begin position="42"/>
        <end position="44"/>
    </location>
</feature>
<feature type="helix" evidence="7">
    <location>
        <begin position="45"/>
        <end position="47"/>
    </location>
</feature>
<feature type="helix" evidence="7">
    <location>
        <begin position="50"/>
        <end position="52"/>
    </location>
</feature>
<organism>
    <name type="scientific">Drosophila melanogaster</name>
    <name type="common">Fruit fly</name>
    <dbReference type="NCBI Taxonomy" id="7227"/>
    <lineage>
        <taxon>Eukaryota</taxon>
        <taxon>Metazoa</taxon>
        <taxon>Ecdysozoa</taxon>
        <taxon>Arthropoda</taxon>
        <taxon>Hexapoda</taxon>
        <taxon>Insecta</taxon>
        <taxon>Pterygota</taxon>
        <taxon>Neoptera</taxon>
        <taxon>Endopterygota</taxon>
        <taxon>Diptera</taxon>
        <taxon>Brachycera</taxon>
        <taxon>Muscomorpha</taxon>
        <taxon>Ephydroidea</taxon>
        <taxon>Drosophilidae</taxon>
        <taxon>Drosophila</taxon>
        <taxon>Sophophora</taxon>
    </lineage>
</organism>
<sequence length="751" mass="86770">MKYCKFCCKAVTGVKLIHVPKCAIKRKLWEQSLGCSLGENSQICDTHFNDSQWKAAPAKGQTFKRRRLNADAVPSKVIEPEPEKIKEGYTSGSTQTESCSLFNENKSLREKIRTLEYEMRRLEQQLRESQQLEESLRKIFTDTQIRILKNGGQRATFNSDDISTAICLHTAGPRAYNHLYKKGFPLPSRTTLYRWLSDVDIKRGCLDVVIDLMDSDGVDDADKLCVLAFDEMKVAAAFEYDSSADIVYEPSDYVQLAIVRGLKKSWKQPVFFDFNTRMDPDTLNNILRKLHRKGYLVVAIVSDLGTGNQKLWTELGISESKTWFSHPADDHLKIFVFSDTPHLIKLVRNHYVDSGLTINGKKLTKKTIQEALHLCNKSDLSILFKINENHINVRSLAKQKVKLATQLFSNTTASSIRRCYSLGYDIENATETADFFKLMNDWFDIFNSKLSTSNCIECSQPYGKQLDIQNDILNRMSEIMRTGILDKPKRLPFQKGIIVNNASLDGLYKYLQENFSMQYILTSRLNQDIVEHFFGSMRSRGGQFDHPTPLQFKYRLRKYIIGMTNLKECVNKNVIPDNSESWLNLDFSSKENENKSKDDEPVDDEPVDEMLSNIDFTEMDELTEDAMEYIAGYVIKKLRISDKVKENLTFTYVDEVSHGGLIKPSEKFQEKLKELECIFLHYTNNNNFEITNNVKEKLILAARNVDVDKQVKSFYFKIRIYFRIKYFNKKIEIKNQKQKLIGNSKLLKIKL</sequence>
<name>PELET_DROME</name>
<accession>Q7M3K2</accession>
<reference evidence="5" key="1">
    <citation type="journal article" date="1986" name="Cell">
        <title>Tissue specificity of Drosophila P element transposition is regulated at the level of mRNA splicing.</title>
        <authorList>
            <person name="Laski F.A."/>
            <person name="Rio D.C."/>
            <person name="Rubin G.M."/>
        </authorList>
    </citation>
    <scope>NUCLEOTIDE SEQUENCE [MRNA]</scope>
</reference>
<reference evidence="5 6" key="2">
    <citation type="journal article" date="1986" name="Cell">
        <title>Identification and immunochemical analysis of biologically active Drosophila P element transposase.</title>
        <authorList>
            <person name="Rio D.C."/>
            <person name="Laski F.A."/>
            <person name="Rubin G.M."/>
        </authorList>
    </citation>
    <scope>FUNCTION</scope>
    <scope>ALTERNATIVE SPLICING</scope>
</reference>
<reference key="3">
    <citation type="journal article" date="2010" name="Nat. Struct. Mol. Biol.">
        <title>THAP proteins target specific DNA sites through bipartite recognition of adjacent major and minor grooves.</title>
        <authorList>
            <person name="Sabogal A."/>
            <person name="Lyubimov A.Y."/>
            <person name="Corn J.E."/>
            <person name="Berger J.M."/>
            <person name="Rio D.C."/>
        </authorList>
    </citation>
    <scope>X-RAY CRYSTALLOGRAPHY (1.74 ANGSTROMS) OF 1-77 IN COMPLEX WITH DNA</scope>
    <scope>FUNCTION</scope>
    <scope>DNA-BINDING</scope>
    <scope>MUTAGENESIS OF HIS-18; GLN-42; ARG-65; ARG-66 AND ARG-67</scope>
</reference>
<protein>
    <recommendedName>
        <fullName>Transposable element P transposase</fullName>
        <shortName>P-element transposase</shortName>
        <ecNumber>2.7.7.-</ecNumber>
    </recommendedName>
    <alternativeName>
        <fullName>THAP domain-containing protein</fullName>
        <shortName>DmTHAP</shortName>
    </alternativeName>
</protein>
<dbReference type="EC" id="2.7.7.-"/>
<dbReference type="PIR" id="A24786">
    <property type="entry name" value="A24786"/>
</dbReference>
<dbReference type="PDB" id="3KDE">
    <property type="method" value="X-ray"/>
    <property type="resolution" value="1.74 A"/>
    <property type="chains" value="C=1-77"/>
</dbReference>
<dbReference type="PDB" id="6P5A">
    <property type="method" value="EM"/>
    <property type="resolution" value="3.60 A"/>
    <property type="chains" value="A/G=1-561, B/H=617-751"/>
</dbReference>
<dbReference type="PDB" id="6PE2">
    <property type="method" value="EM"/>
    <property type="resolution" value="4.00 A"/>
    <property type="chains" value="A/G=1-561, B/H=617-751"/>
</dbReference>
<dbReference type="PDBsum" id="3KDE"/>
<dbReference type="PDBsum" id="6P5A"/>
<dbReference type="PDBsum" id="6PE2"/>
<dbReference type="EMDB" id="EMD-20254"/>
<dbReference type="EMDB" id="EMD-20321"/>
<dbReference type="SMR" id="Q7M3K2"/>
<dbReference type="PRO" id="PR:Q7M3K2"/>
<dbReference type="GO" id="GO:0003693">
    <property type="term" value="F:P-element binding"/>
    <property type="evidence" value="ECO:0000314"/>
    <property type="project" value="UniProtKB"/>
</dbReference>
<dbReference type="GO" id="GO:0016740">
    <property type="term" value="F:transferase activity"/>
    <property type="evidence" value="ECO:0007669"/>
    <property type="project" value="UniProtKB-KW"/>
</dbReference>
<dbReference type="GO" id="GO:0004803">
    <property type="term" value="F:transposase activity"/>
    <property type="evidence" value="ECO:0000314"/>
    <property type="project" value="UniProtKB"/>
</dbReference>
<dbReference type="GO" id="GO:0008270">
    <property type="term" value="F:zinc ion binding"/>
    <property type="evidence" value="ECO:0007669"/>
    <property type="project" value="UniProtKB-KW"/>
</dbReference>
<dbReference type="GO" id="GO:0015074">
    <property type="term" value="P:DNA integration"/>
    <property type="evidence" value="ECO:0007669"/>
    <property type="project" value="UniProtKB-KW"/>
</dbReference>
<dbReference type="GO" id="GO:0006313">
    <property type="term" value="P:DNA transposition"/>
    <property type="evidence" value="ECO:0000314"/>
    <property type="project" value="UniProtKB"/>
</dbReference>
<dbReference type="Gene3D" id="6.20.210.20">
    <property type="entry name" value="THAP domain"/>
    <property type="match status" value="1"/>
</dbReference>
<dbReference type="InterPro" id="IPR006612">
    <property type="entry name" value="THAP_Znf"/>
</dbReference>
<dbReference type="InterPro" id="IPR038441">
    <property type="entry name" value="THAP_Znf_sf"/>
</dbReference>
<dbReference type="InterPro" id="IPR022242">
    <property type="entry name" value="TNP-like_C"/>
</dbReference>
<dbReference type="InterPro" id="IPR048366">
    <property type="entry name" value="TNP-like_GBD"/>
</dbReference>
<dbReference type="InterPro" id="IPR048367">
    <property type="entry name" value="TNP-like_RNaseH_C"/>
</dbReference>
<dbReference type="InterPro" id="IPR048365">
    <property type="entry name" value="TNP-like_RNaseH_N"/>
</dbReference>
<dbReference type="PANTHER" id="PTHR47577:SF2">
    <property type="entry name" value="THAP DOMAIN CONTAINING 9"/>
    <property type="match status" value="1"/>
</dbReference>
<dbReference type="PANTHER" id="PTHR47577">
    <property type="entry name" value="THAP DOMAIN-CONTAINING PROTEIN 6"/>
    <property type="match status" value="1"/>
</dbReference>
<dbReference type="Pfam" id="PF05485">
    <property type="entry name" value="THAP"/>
    <property type="match status" value="1"/>
</dbReference>
<dbReference type="Pfam" id="PF21788">
    <property type="entry name" value="TNP-like_GBD"/>
    <property type="match status" value="1"/>
</dbReference>
<dbReference type="Pfam" id="PF21789">
    <property type="entry name" value="TNP-like_RNaseH_C"/>
    <property type="match status" value="1"/>
</dbReference>
<dbReference type="Pfam" id="PF21787">
    <property type="entry name" value="TNP-like_RNaseH_N"/>
    <property type="match status" value="1"/>
</dbReference>
<dbReference type="Pfam" id="PF12596">
    <property type="entry name" value="Tnp_P_element_C"/>
    <property type="match status" value="1"/>
</dbReference>
<dbReference type="SMART" id="SM00692">
    <property type="entry name" value="DM3"/>
    <property type="match status" value="1"/>
</dbReference>
<dbReference type="SUPFAM" id="SSF57716">
    <property type="entry name" value="Glucocorticoid receptor-like (DNA-binding domain)"/>
    <property type="match status" value="1"/>
</dbReference>
<dbReference type="PROSITE" id="PS50950">
    <property type="entry name" value="ZF_THAP"/>
    <property type="match status" value="1"/>
</dbReference>
<gene>
    <name evidence="5" type="primary">T</name>
</gene>
<comment type="function">
    <text evidence="2 3">P-element transposase that specifically mediates transposition of P-elements. Mediates both; precise and imprecise excision.</text>
</comment>
<comment type="alternative products">
    <event type="alternative splicing"/>
    <isoform>
        <id>Q7M3K2-1</id>
        <name evidence="3">A</name>
        <name evidence="4">87000Da</name>
        <sequence type="displayed"/>
    </isoform>
    <isoform>
        <id>Q7M3K2-2</id>
        <name evidence="3">B</name>
        <name evidence="4">66000Da</name>
        <sequence type="described" ref="VSP_051943 VSP_051944"/>
    </isoform>
    <isoform>
        <id>Q7M3K2-3</id>
        <name evidence="3">C</name>
        <sequence type="described" ref="VSP_051942"/>
    </isoform>
</comment>
<comment type="domain">
    <text evidence="2">The THAP-type zinc finger mediates DNA-binding and specifically recognizes sequence elements in a bipartite manner using both the major and minor grooves of its target DNA site. Minor-groove recognition is achieved by a combination of direct base contacts and indirect sequence readout of DNA deformation through a variable, basic loop. By contrast, the adjacent major groove is sequence-specifically recognized by the central beta-sheet of the domain (PubMed:20010837).</text>
</comment>
<proteinExistence type="evidence at protein level"/>
<evidence type="ECO:0000255" key="1">
    <source>
        <dbReference type="PROSITE-ProRule" id="PRU00309"/>
    </source>
</evidence>
<evidence type="ECO:0000269" key="2">
    <source>
    </source>
</evidence>
<evidence type="ECO:0000269" key="3">
    <source>
    </source>
</evidence>
<evidence type="ECO:0000303" key="4">
    <source>
    </source>
</evidence>
<evidence type="ECO:0000305" key="5"/>
<evidence type="ECO:0000312" key="6">
    <source>
        <dbReference type="PIR" id="A24786"/>
    </source>
</evidence>
<evidence type="ECO:0007829" key="7">
    <source>
        <dbReference type="PDB" id="3KDE"/>
    </source>
</evidence>